<proteinExistence type="inferred from homology"/>
<accession>Q6FKA5</accession>
<sequence length="1037" mass="119213">MNGTRAAPGVTPSEVAMNGKNEMEVVEQAPIPKTNANIGLKSPVNTVEDVNQEDSTNSPPPIPHVEINQMPLSMIIRNLTVYTVKEISQYMKTTVHMNTADTSTARKMRFLNLLIFIRNQFLKLYVLIKWCRTIKENNFNIMIDLLNWFRGTNMTVNNCIWALKSTLESTTNAKLPNVDLVTALEVLTLGRPNLPTHDFKLSGENNEYETVNGQLRIPTKLIMQRLKDLNIIVMIKISSIDIPKQFNNYEIRDGRVYITVPGEFEIQLSTIDRHSPFFFVDFKLLFAGTDSLFNKPRLEKIINDVLLRNKKPLYSLYSLLHRYVLTLQLYMIHLELLNLENDGKFSGGNLVHSYNAKKSLIVMKYWRNGKLGNKTKIIIGVDRKSEDLVLKWDNENAKQSMHMPLVYTHVVGNVEAILDEIMFNHSRLIRADLLSRGVFQEDEEDPSVLLFQLPTTCLSTAPIQLKIDLVSGVFYFKNPSPLLLEYVSQINRAETPEDLTSVLQRLKLDKIVHIIRNMFDKTGWVCSKVIKLDNPIATSVNSEEIKTNLLQNDMFIRLASWPVNWYLILTIVSSNSSCIIEKRIGKIISTSGKWKVQYLDTTNVLSLKLESITYKKIISLQKSTLNRIINHTLIDSLNHLKTRNKVCSPDLIVNSLPKHLLEDEVDDKVPHSIENYHHISLITIELESFLEGSKALSGILESTMFLRMDYKKFEIRLYGKFKRSTMAFHCQCDDLLINFVEREPLAFYLAETFTNLNEIVQYLTLFRQKLMQLVVLTDVVERLHKNFASDHFKIISLKPNEVTFKYLKSSTDDKDCTINIITNEQTIKNLTVKLSDKNPQHIIQPFIDNQQFEYQFIFSYLQFTSPLFCCLKEILDESNKEERLENAKEESDSTRTSTSITLGLHNLSEYQLVYFNPELGYKITLILELKEVSINGKKKIQFYVHFSQDEHITTKSSAYPLIHQVRNEIFMLEMKKRDGTPSLIKLDNTRNVIRLGNGISCDSDSIVEVLMSINKILLGDSKSAPQITTVPPTNKTI</sequence>
<gene>
    <name type="primary">RGR1</name>
    <name type="synonym">MED14</name>
    <name type="ordered locus">CAGL0L13112g</name>
</gene>
<dbReference type="EMBL" id="CR380958">
    <property type="protein sequence ID" value="CAG62313.1"/>
    <property type="molecule type" value="Genomic_DNA"/>
</dbReference>
<dbReference type="RefSeq" id="XP_449339.1">
    <property type="nucleotide sequence ID" value="XM_449339.1"/>
</dbReference>
<dbReference type="SMR" id="Q6FKA5"/>
<dbReference type="FunCoup" id="Q6FKA5">
    <property type="interactions" value="310"/>
</dbReference>
<dbReference type="STRING" id="284593.Q6FKA5"/>
<dbReference type="EnsemblFungi" id="CAGL0L13112g-T">
    <property type="protein sequence ID" value="CAGL0L13112g-T-p1"/>
    <property type="gene ID" value="CAGL0L13112g"/>
</dbReference>
<dbReference type="GeneID" id="2890589"/>
<dbReference type="KEGG" id="cgr:2890589"/>
<dbReference type="CGD" id="CAL0135684">
    <property type="gene designation" value="RGR1"/>
</dbReference>
<dbReference type="VEuPathDB" id="FungiDB:CAGL0L13112g"/>
<dbReference type="eggNOG" id="KOG1875">
    <property type="taxonomic scope" value="Eukaryota"/>
</dbReference>
<dbReference type="HOGENOM" id="CLU_286680_0_0_1"/>
<dbReference type="InParanoid" id="Q6FKA5"/>
<dbReference type="OMA" id="MIDLLNW"/>
<dbReference type="Proteomes" id="UP000002428">
    <property type="component" value="Chromosome L"/>
</dbReference>
<dbReference type="GO" id="GO:0070847">
    <property type="term" value="C:core mediator complex"/>
    <property type="evidence" value="ECO:0007669"/>
    <property type="project" value="EnsemblFungi"/>
</dbReference>
<dbReference type="GO" id="GO:0016592">
    <property type="term" value="C:mediator complex"/>
    <property type="evidence" value="ECO:0007669"/>
    <property type="project" value="InterPro"/>
</dbReference>
<dbReference type="GO" id="GO:0061629">
    <property type="term" value="F:RNA polymerase II-specific DNA-binding transcription factor binding"/>
    <property type="evidence" value="ECO:0007669"/>
    <property type="project" value="EnsemblFungi"/>
</dbReference>
<dbReference type="GO" id="GO:0001093">
    <property type="term" value="F:TFIIB-class transcription factor binding"/>
    <property type="evidence" value="ECO:0007669"/>
    <property type="project" value="EnsemblFungi"/>
</dbReference>
<dbReference type="GO" id="GO:0003712">
    <property type="term" value="F:transcription coregulator activity"/>
    <property type="evidence" value="ECO:0007669"/>
    <property type="project" value="InterPro"/>
</dbReference>
<dbReference type="GO" id="GO:0000122">
    <property type="term" value="P:negative regulation of transcription by RNA polymerase II"/>
    <property type="evidence" value="ECO:0007669"/>
    <property type="project" value="EnsemblFungi"/>
</dbReference>
<dbReference type="GO" id="GO:0032968">
    <property type="term" value="P:positive regulation of transcription elongation by RNA polymerase II"/>
    <property type="evidence" value="ECO:0007669"/>
    <property type="project" value="EnsemblFungi"/>
</dbReference>
<dbReference type="GO" id="GO:0060261">
    <property type="term" value="P:positive regulation of transcription initiation by RNA polymerase II"/>
    <property type="evidence" value="ECO:0007669"/>
    <property type="project" value="EnsemblFungi"/>
</dbReference>
<dbReference type="GO" id="GO:0051123">
    <property type="term" value="P:RNA polymerase II preinitiation complex assembly"/>
    <property type="evidence" value="ECO:0007669"/>
    <property type="project" value="EnsemblFungi"/>
</dbReference>
<dbReference type="InterPro" id="IPR055122">
    <property type="entry name" value="Med14_N"/>
</dbReference>
<dbReference type="InterPro" id="IPR013947">
    <property type="entry name" value="Mediator_Med14"/>
</dbReference>
<dbReference type="PANTHER" id="PTHR12809">
    <property type="entry name" value="MEDIATOR COMPLEX SUBUNIT"/>
    <property type="match status" value="1"/>
</dbReference>
<dbReference type="PANTHER" id="PTHR12809:SF2">
    <property type="entry name" value="MEDIATOR OF RNA POLYMERASE II TRANSCRIPTION SUBUNIT 14"/>
    <property type="match status" value="1"/>
</dbReference>
<dbReference type="Pfam" id="PF08638">
    <property type="entry name" value="Med14"/>
    <property type="match status" value="1"/>
</dbReference>
<organism>
    <name type="scientific">Candida glabrata (strain ATCC 2001 / BCRC 20586 / JCM 3761 / NBRC 0622 / NRRL Y-65 / CBS 138)</name>
    <name type="common">Yeast</name>
    <name type="synonym">Nakaseomyces glabratus</name>
    <dbReference type="NCBI Taxonomy" id="284593"/>
    <lineage>
        <taxon>Eukaryota</taxon>
        <taxon>Fungi</taxon>
        <taxon>Dikarya</taxon>
        <taxon>Ascomycota</taxon>
        <taxon>Saccharomycotina</taxon>
        <taxon>Saccharomycetes</taxon>
        <taxon>Saccharomycetales</taxon>
        <taxon>Saccharomycetaceae</taxon>
        <taxon>Nakaseomyces</taxon>
    </lineage>
</organism>
<feature type="chain" id="PRO_0000304598" description="Mediator of RNA polymerase II transcription subunit 14">
    <location>
        <begin position="1"/>
        <end position="1037"/>
    </location>
</feature>
<comment type="function">
    <text evidence="1">Component of the Mediator complex, a coactivator involved in the regulated transcription of nearly all RNA polymerase II-dependent genes. Mediator functions as a bridge to convey information from gene-specific regulatory proteins to the basal RNA polymerase II transcription machinery. Mediator is recruited to promoters by direct interactions with regulatory proteins and serves as a scaffold for the assembly of a functional preinitiation complex with RNA polymerase II and the general transcription factors (By similarity).</text>
</comment>
<comment type="subunit">
    <text evidence="1">Component of the Mediator complex.</text>
</comment>
<comment type="subcellular location">
    <subcellularLocation>
        <location evidence="2">Nucleus</location>
    </subcellularLocation>
</comment>
<comment type="similarity">
    <text evidence="2">Belongs to the Mediator complex subunit 14 family.</text>
</comment>
<protein>
    <recommendedName>
        <fullName>Mediator of RNA polymerase II transcription subunit 14</fullName>
    </recommendedName>
    <alternativeName>
        <fullName>Mediator complex subunit 14</fullName>
    </alternativeName>
</protein>
<reference key="1">
    <citation type="journal article" date="2004" name="Nature">
        <title>Genome evolution in yeasts.</title>
        <authorList>
            <person name="Dujon B."/>
            <person name="Sherman D."/>
            <person name="Fischer G."/>
            <person name="Durrens P."/>
            <person name="Casaregola S."/>
            <person name="Lafontaine I."/>
            <person name="de Montigny J."/>
            <person name="Marck C."/>
            <person name="Neuveglise C."/>
            <person name="Talla E."/>
            <person name="Goffard N."/>
            <person name="Frangeul L."/>
            <person name="Aigle M."/>
            <person name="Anthouard V."/>
            <person name="Babour A."/>
            <person name="Barbe V."/>
            <person name="Barnay S."/>
            <person name="Blanchin S."/>
            <person name="Beckerich J.-M."/>
            <person name="Beyne E."/>
            <person name="Bleykasten C."/>
            <person name="Boisrame A."/>
            <person name="Boyer J."/>
            <person name="Cattolico L."/>
            <person name="Confanioleri F."/>
            <person name="de Daruvar A."/>
            <person name="Despons L."/>
            <person name="Fabre E."/>
            <person name="Fairhead C."/>
            <person name="Ferry-Dumazet H."/>
            <person name="Groppi A."/>
            <person name="Hantraye F."/>
            <person name="Hennequin C."/>
            <person name="Jauniaux N."/>
            <person name="Joyet P."/>
            <person name="Kachouri R."/>
            <person name="Kerrest A."/>
            <person name="Koszul R."/>
            <person name="Lemaire M."/>
            <person name="Lesur I."/>
            <person name="Ma L."/>
            <person name="Muller H."/>
            <person name="Nicaud J.-M."/>
            <person name="Nikolski M."/>
            <person name="Oztas S."/>
            <person name="Ozier-Kalogeropoulos O."/>
            <person name="Pellenz S."/>
            <person name="Potier S."/>
            <person name="Richard G.-F."/>
            <person name="Straub M.-L."/>
            <person name="Suleau A."/>
            <person name="Swennen D."/>
            <person name="Tekaia F."/>
            <person name="Wesolowski-Louvel M."/>
            <person name="Westhof E."/>
            <person name="Wirth B."/>
            <person name="Zeniou-Meyer M."/>
            <person name="Zivanovic Y."/>
            <person name="Bolotin-Fukuhara M."/>
            <person name="Thierry A."/>
            <person name="Bouchier C."/>
            <person name="Caudron B."/>
            <person name="Scarpelli C."/>
            <person name="Gaillardin C."/>
            <person name="Weissenbach J."/>
            <person name="Wincker P."/>
            <person name="Souciet J.-L."/>
        </authorList>
    </citation>
    <scope>NUCLEOTIDE SEQUENCE [LARGE SCALE GENOMIC DNA]</scope>
    <source>
        <strain>ATCC 2001 / BCRC 20586 / JCM 3761 / NBRC 0622 / NRRL Y-65 / CBS 138</strain>
    </source>
</reference>
<name>MED14_CANGA</name>
<keyword id="KW-0010">Activator</keyword>
<keyword id="KW-0539">Nucleus</keyword>
<keyword id="KW-1185">Reference proteome</keyword>
<keyword id="KW-0804">Transcription</keyword>
<keyword id="KW-0805">Transcription regulation</keyword>
<evidence type="ECO:0000250" key="1"/>
<evidence type="ECO:0000305" key="2"/>